<evidence type="ECO:0000250" key="1"/>
<evidence type="ECO:0000250" key="2">
    <source>
        <dbReference type="UniProtKB" id="P18893"/>
    </source>
</evidence>
<evidence type="ECO:0000250" key="3">
    <source>
        <dbReference type="UniProtKB" id="P22301"/>
    </source>
</evidence>
<evidence type="ECO:0000255" key="4"/>
<evidence type="ECO:0000305" key="5"/>
<organism>
    <name type="scientific">Pan troglodytes</name>
    <name type="common">Chimpanzee</name>
    <dbReference type="NCBI Taxonomy" id="9598"/>
    <lineage>
        <taxon>Eukaryota</taxon>
        <taxon>Metazoa</taxon>
        <taxon>Chordata</taxon>
        <taxon>Craniata</taxon>
        <taxon>Vertebrata</taxon>
        <taxon>Euteleostomi</taxon>
        <taxon>Mammalia</taxon>
        <taxon>Eutheria</taxon>
        <taxon>Euarchontoglires</taxon>
        <taxon>Primates</taxon>
        <taxon>Haplorrhini</taxon>
        <taxon>Catarrhini</taxon>
        <taxon>Hominidae</taxon>
        <taxon>Pan</taxon>
    </lineage>
</organism>
<name>IL10_PANTR</name>
<gene>
    <name type="primary">IL10</name>
</gene>
<accession>A2T6Z6</accession>
<keyword id="KW-0202">Cytokine</keyword>
<keyword id="KW-1015">Disulfide bond</keyword>
<keyword id="KW-0325">Glycoprotein</keyword>
<keyword id="KW-1185">Reference proteome</keyword>
<keyword id="KW-0964">Secreted</keyword>
<keyword id="KW-0732">Signal</keyword>
<protein>
    <recommendedName>
        <fullName>Interleukin-10</fullName>
        <shortName>IL-10</shortName>
    </recommendedName>
    <alternativeName>
        <fullName>Cytokine synthesis inhibitory factor</fullName>
        <shortName>CSIF</shortName>
    </alternativeName>
</protein>
<proteinExistence type="inferred from homology"/>
<feature type="signal peptide" evidence="4">
    <location>
        <begin position="1"/>
        <end position="18"/>
    </location>
</feature>
<feature type="chain" id="PRO_0000285492" description="Interleukin-10">
    <location>
        <begin position="19"/>
        <end position="178"/>
    </location>
</feature>
<feature type="glycosylation site" description="N-linked (GlcNAc...) asparagine" evidence="4">
    <location>
        <position position="134"/>
    </location>
</feature>
<feature type="disulfide bond" evidence="1">
    <location>
        <begin position="30"/>
        <end position="126"/>
    </location>
</feature>
<feature type="disulfide bond" evidence="1">
    <location>
        <begin position="80"/>
        <end position="132"/>
    </location>
</feature>
<dbReference type="EMBL" id="DQ977340">
    <property type="protein sequence ID" value="ABM91951.1"/>
    <property type="molecule type" value="Genomic_DNA"/>
</dbReference>
<dbReference type="STRING" id="9598.ENSPTRP00000003208"/>
<dbReference type="GlyCosmos" id="A2T6Z6">
    <property type="glycosylation" value="1 site, No reported glycans"/>
</dbReference>
<dbReference type="PaxDb" id="9598-ENSPTRP00000003208"/>
<dbReference type="eggNOG" id="ENOG502S22U">
    <property type="taxonomic scope" value="Eukaryota"/>
</dbReference>
<dbReference type="InParanoid" id="A2T6Z6"/>
<dbReference type="Proteomes" id="UP000002277">
    <property type="component" value="Unplaced"/>
</dbReference>
<dbReference type="GO" id="GO:0005615">
    <property type="term" value="C:extracellular space"/>
    <property type="evidence" value="ECO:0000250"/>
    <property type="project" value="UniProtKB"/>
</dbReference>
<dbReference type="GO" id="GO:0005125">
    <property type="term" value="F:cytokine activity"/>
    <property type="evidence" value="ECO:0000318"/>
    <property type="project" value="GO_Central"/>
</dbReference>
<dbReference type="GO" id="GO:0006955">
    <property type="term" value="P:immune response"/>
    <property type="evidence" value="ECO:0000318"/>
    <property type="project" value="GO_Central"/>
</dbReference>
<dbReference type="GO" id="GO:0140105">
    <property type="term" value="P:interleukin-10-mediated signaling pathway"/>
    <property type="evidence" value="ECO:0000318"/>
    <property type="project" value="GO_Central"/>
</dbReference>
<dbReference type="GO" id="GO:0030889">
    <property type="term" value="P:negative regulation of B cell proliferation"/>
    <property type="evidence" value="ECO:0000250"/>
    <property type="project" value="UniProtKB"/>
</dbReference>
<dbReference type="GO" id="GO:0002719">
    <property type="term" value="P:negative regulation of cytokine production involved in immune response"/>
    <property type="evidence" value="ECO:0000250"/>
    <property type="project" value="UniProtKB"/>
</dbReference>
<dbReference type="GO" id="GO:0050728">
    <property type="term" value="P:negative regulation of inflammatory response"/>
    <property type="evidence" value="ECO:0000250"/>
    <property type="project" value="UniProtKB"/>
</dbReference>
<dbReference type="GO" id="GO:0032715">
    <property type="term" value="P:negative regulation of interleukin-6 production"/>
    <property type="evidence" value="ECO:0000250"/>
    <property type="project" value="UniProtKB"/>
</dbReference>
<dbReference type="GO" id="GO:0051045">
    <property type="term" value="P:negative regulation of membrane protein ectodomain proteolysis"/>
    <property type="evidence" value="ECO:0000250"/>
    <property type="project" value="UniProtKB"/>
</dbReference>
<dbReference type="GO" id="GO:0002904">
    <property type="term" value="P:positive regulation of B cell apoptotic process"/>
    <property type="evidence" value="ECO:0000250"/>
    <property type="project" value="UniProtKB"/>
</dbReference>
<dbReference type="GO" id="GO:0001819">
    <property type="term" value="P:positive regulation of cytokine production"/>
    <property type="evidence" value="ECO:0000250"/>
    <property type="project" value="UniProtKB"/>
</dbReference>
<dbReference type="GO" id="GO:0051091">
    <property type="term" value="P:positive regulation of DNA-binding transcription factor activity"/>
    <property type="evidence" value="ECO:0000250"/>
    <property type="project" value="UniProtKB"/>
</dbReference>
<dbReference type="GO" id="GO:0045893">
    <property type="term" value="P:positive regulation of DNA-templated transcription"/>
    <property type="evidence" value="ECO:0000250"/>
    <property type="project" value="UniProtKB"/>
</dbReference>
<dbReference type="GO" id="GO:0046427">
    <property type="term" value="P:positive regulation of receptor signaling pathway via JAK-STAT"/>
    <property type="evidence" value="ECO:0000318"/>
    <property type="project" value="GO_Central"/>
</dbReference>
<dbReference type="GO" id="GO:0051384">
    <property type="term" value="P:response to glucocorticoid"/>
    <property type="evidence" value="ECO:0000250"/>
    <property type="project" value="UniProtKB"/>
</dbReference>
<dbReference type="GO" id="GO:0002237">
    <property type="term" value="P:response to molecule of bacterial origin"/>
    <property type="evidence" value="ECO:0000250"/>
    <property type="project" value="UniProtKB"/>
</dbReference>
<dbReference type="FunFam" id="1.20.1250.10:FF:000011">
    <property type="entry name" value="Interleukin-10"/>
    <property type="match status" value="1"/>
</dbReference>
<dbReference type="Gene3D" id="1.20.1250.10">
    <property type="match status" value="1"/>
</dbReference>
<dbReference type="InterPro" id="IPR009079">
    <property type="entry name" value="4_helix_cytokine-like_core"/>
</dbReference>
<dbReference type="InterPro" id="IPR000098">
    <property type="entry name" value="IL-10"/>
</dbReference>
<dbReference type="InterPro" id="IPR020443">
    <property type="entry name" value="IL-10/19/20/24/26"/>
</dbReference>
<dbReference type="InterPro" id="IPR020423">
    <property type="entry name" value="IL-10_CS"/>
</dbReference>
<dbReference type="PANTHER" id="PTHR48482:SF5">
    <property type="entry name" value="INTERLEUKIN-10"/>
    <property type="match status" value="1"/>
</dbReference>
<dbReference type="PANTHER" id="PTHR48482">
    <property type="entry name" value="INTERLEUKIN-19-RELATED"/>
    <property type="match status" value="1"/>
</dbReference>
<dbReference type="Pfam" id="PF00726">
    <property type="entry name" value="IL10"/>
    <property type="match status" value="1"/>
</dbReference>
<dbReference type="PRINTS" id="PR01294">
    <property type="entry name" value="INTRLEUKIN10"/>
</dbReference>
<dbReference type="SMART" id="SM00188">
    <property type="entry name" value="IL10"/>
    <property type="match status" value="1"/>
</dbReference>
<dbReference type="SUPFAM" id="SSF47266">
    <property type="entry name" value="4-helical cytokines"/>
    <property type="match status" value="1"/>
</dbReference>
<dbReference type="PROSITE" id="PS00520">
    <property type="entry name" value="INTERLEUKIN_10"/>
    <property type="match status" value="1"/>
</dbReference>
<reference key="1">
    <citation type="submission" date="2006-08" db="EMBL/GenBank/DDBJ databases">
        <title>Positive selection in transcription factor genes on the human lineage.</title>
        <authorList>
            <person name="Nickel G.C."/>
            <person name="Tefft D.L."/>
            <person name="Trevarthen K."/>
            <person name="Funt J."/>
            <person name="Adams M.D."/>
        </authorList>
    </citation>
    <scope>NUCLEOTIDE SEQUENCE [GENOMIC DNA]</scope>
</reference>
<comment type="function">
    <text evidence="2 3">Major immune regulatory cytokine that acts on many cells of the immune system where it has profound anti-inflammatory functions, limiting excessive tissue disruption caused by inflammation. Mechanistically, IL10 binds to its heterotetrameric receptor comprising IL10RA and IL10RB leading to JAK1 and STAT2-mediated phosphorylation of STAT3. In turn, STAT3 translocates to the nucleus where it drives expression of anti-inflammatory mediators. Targets antigen-presenting cells (APCs) such as macrophages and monocytes and inhibits their release of pro-inflammatory cytokines including granulocyte-macrophage colony-stimulating factor /GM-CSF, granulocyte colony-stimulating factor/G-CSF, IL-1 alpha, IL-1 beta, IL-6, IL-8 and TNF-alpha. Also interferes with antigen presentation by reducing the expression of MHC-class II and co-stimulatory molecules, thereby inhibiting their ability to induce T cell activation (By similarity). In addition, controls the inflammatory response of macrophages by reprogramming essential metabolic pathways including mTOR signaling (By similarity).</text>
</comment>
<comment type="subunit">
    <text evidence="3">Homodimer. Interacts with IL10RA and IL10RB.</text>
</comment>
<comment type="subcellular location">
    <subcellularLocation>
        <location evidence="3">Secreted</location>
    </subcellularLocation>
</comment>
<comment type="similarity">
    <text evidence="5">Belongs to the IL-10 family.</text>
</comment>
<sequence>MHSSALLCCLVLLTGVRASPGQGTQSENSCTHFPGNLPNMLRDLRDAFSRVKTFFQMKDQLDNLLLKESLLEDFKGYLGCQALXEMIQFYLEEVMPQAENQDPDIKVHVNSLGENLKTLRLRLRRCHRFLPCENKSKAVEQVKNAFNKLQEKGIYKAMSEFDIFINYIEAYMTMKIRN</sequence>